<name>TRMYL_SHEB9</name>
<accession>A9L560</accession>
<evidence type="ECO:0000255" key="1">
    <source>
        <dbReference type="HAMAP-Rule" id="MF_00587"/>
    </source>
</evidence>
<comment type="subcellular location">
    <subcellularLocation>
        <location evidence="1">Cytoplasm</location>
    </subcellularLocation>
</comment>
<comment type="similarity">
    <text evidence="1">Belongs to the methyltransferase superfamily. TrmY family.</text>
</comment>
<feature type="chain" id="PRO_1000129785" description="Putative pseudouridine methyltransferase">
    <location>
        <begin position="1"/>
        <end position="198"/>
    </location>
</feature>
<feature type="binding site" evidence="1">
    <location>
        <position position="132"/>
    </location>
    <ligand>
        <name>S-adenosyl-L-methionine</name>
        <dbReference type="ChEBI" id="CHEBI:59789"/>
    </ligand>
</feature>
<feature type="binding site" evidence="1">
    <location>
        <position position="186"/>
    </location>
    <ligand>
        <name>S-adenosyl-L-methionine</name>
        <dbReference type="ChEBI" id="CHEBI:59789"/>
    </ligand>
</feature>
<protein>
    <recommendedName>
        <fullName evidence="1">Putative pseudouridine methyltransferase</fullName>
        <ecNumber evidence="1">2.1.1.-</ecNumber>
    </recommendedName>
</protein>
<proteinExistence type="inferred from homology"/>
<reference key="1">
    <citation type="submission" date="2007-11" db="EMBL/GenBank/DDBJ databases">
        <title>Complete sequence of chromosome of Shewanella baltica OS195.</title>
        <authorList>
            <consortium name="US DOE Joint Genome Institute"/>
            <person name="Copeland A."/>
            <person name="Lucas S."/>
            <person name="Lapidus A."/>
            <person name="Barry K."/>
            <person name="Glavina del Rio T."/>
            <person name="Dalin E."/>
            <person name="Tice H."/>
            <person name="Pitluck S."/>
            <person name="Chain P."/>
            <person name="Malfatti S."/>
            <person name="Shin M."/>
            <person name="Vergez L."/>
            <person name="Schmutz J."/>
            <person name="Larimer F."/>
            <person name="Land M."/>
            <person name="Hauser L."/>
            <person name="Kyrpides N."/>
            <person name="Kim E."/>
            <person name="Brettar I."/>
            <person name="Rodrigues J."/>
            <person name="Konstantinidis K."/>
            <person name="Klappenbach J."/>
            <person name="Hofle M."/>
            <person name="Tiedje J."/>
            <person name="Richardson P."/>
        </authorList>
    </citation>
    <scope>NUCLEOTIDE SEQUENCE [LARGE SCALE GENOMIC DNA]</scope>
    <source>
        <strain>OS195</strain>
    </source>
</reference>
<gene>
    <name type="ordered locus">Sbal195_2654</name>
</gene>
<keyword id="KW-0963">Cytoplasm</keyword>
<keyword id="KW-0489">Methyltransferase</keyword>
<keyword id="KW-0949">S-adenosyl-L-methionine</keyword>
<keyword id="KW-0808">Transferase</keyword>
<dbReference type="EC" id="2.1.1.-" evidence="1"/>
<dbReference type="EMBL" id="CP000891">
    <property type="protein sequence ID" value="ABX49822.1"/>
    <property type="molecule type" value="Genomic_DNA"/>
</dbReference>
<dbReference type="SMR" id="A9L560"/>
<dbReference type="KEGG" id="sbn:Sbal195_2654"/>
<dbReference type="HOGENOM" id="CLU_107018_0_0_6"/>
<dbReference type="Proteomes" id="UP000000770">
    <property type="component" value="Chromosome"/>
</dbReference>
<dbReference type="GO" id="GO:0005737">
    <property type="term" value="C:cytoplasm"/>
    <property type="evidence" value="ECO:0007669"/>
    <property type="project" value="UniProtKB-SubCell"/>
</dbReference>
<dbReference type="GO" id="GO:0008757">
    <property type="term" value="F:S-adenosylmethionine-dependent methyltransferase activity"/>
    <property type="evidence" value="ECO:0007669"/>
    <property type="project" value="UniProtKB-UniRule"/>
</dbReference>
<dbReference type="GO" id="GO:0008175">
    <property type="term" value="F:tRNA methyltransferase activity"/>
    <property type="evidence" value="ECO:0007669"/>
    <property type="project" value="InterPro"/>
</dbReference>
<dbReference type="GO" id="GO:0030488">
    <property type="term" value="P:tRNA methylation"/>
    <property type="evidence" value="ECO:0007669"/>
    <property type="project" value="TreeGrafter"/>
</dbReference>
<dbReference type="CDD" id="cd18087">
    <property type="entry name" value="TrmY-like"/>
    <property type="match status" value="1"/>
</dbReference>
<dbReference type="Gene3D" id="3.40.1280.10">
    <property type="match status" value="1"/>
</dbReference>
<dbReference type="HAMAP" id="MF_00587">
    <property type="entry name" value="tRNA_methyltr_TrmY"/>
    <property type="match status" value="1"/>
</dbReference>
<dbReference type="InterPro" id="IPR029028">
    <property type="entry name" value="Alpha/beta_knot_MTases"/>
</dbReference>
<dbReference type="InterPro" id="IPR007158">
    <property type="entry name" value="TrmY"/>
</dbReference>
<dbReference type="InterPro" id="IPR029026">
    <property type="entry name" value="tRNA_m1G_MTases_N"/>
</dbReference>
<dbReference type="NCBIfam" id="NF002560">
    <property type="entry name" value="PRK02135.1"/>
    <property type="match status" value="1"/>
</dbReference>
<dbReference type="PANTHER" id="PTHR40703">
    <property type="entry name" value="TRNA (PSEUDOURIDINE(54)-N(1))-METHYLTRANSFERASE"/>
    <property type="match status" value="1"/>
</dbReference>
<dbReference type="PANTHER" id="PTHR40703:SF1">
    <property type="entry name" value="TRNA (PSEUDOURIDINE(54)-N(1))-METHYLTRANSFERASE"/>
    <property type="match status" value="1"/>
</dbReference>
<dbReference type="Pfam" id="PF04013">
    <property type="entry name" value="Methyltrn_RNA_2"/>
    <property type="match status" value="1"/>
</dbReference>
<dbReference type="SUPFAM" id="SSF75217">
    <property type="entry name" value="alpha/beta knot"/>
    <property type="match status" value="1"/>
</dbReference>
<organism>
    <name type="scientific">Shewanella baltica (strain OS195)</name>
    <dbReference type="NCBI Taxonomy" id="399599"/>
    <lineage>
        <taxon>Bacteria</taxon>
        <taxon>Pseudomonadati</taxon>
        <taxon>Pseudomonadota</taxon>
        <taxon>Gammaproteobacteria</taxon>
        <taxon>Alteromonadales</taxon>
        <taxon>Shewanellaceae</taxon>
        <taxon>Shewanella</taxon>
    </lineage>
</organism>
<sequence>MRAFVLRARSAPTDSQLFLASVGQEAHTEILAHTLMNTIFVAQSHRNDVVVYLVLESTHDFSRTICFDTRNICHIGGFHEQALLTKIAKALDISRGMTKEQTRVVDEGITVSTISFEKLVQDLAVDYQLFMMDKKGTSIREQEFVGNPCFLLTDHIPMPKKSFNTLKRLGAQKISLGPKMLFASQCVVLIHNELDINQ</sequence>